<sequence length="355" mass="40310">MTQESNSNFFNFLLFGFVTAIAFYSGTQFNKSSEQEEHINHANLYSVKKFDDGAKEYSIMLITDLDHDSKDGKKWKSLVSRGFLKVSADHKHADIHFDKDSEYYVDTNIAAGGRAMELSDLAVFNGKLYSIDDRTGLIYQISDKKALPWVLLNDGPGNVVKGFKGEWITVKDTELIVGGLGKEWTTTDGVYVNDHPMWVKHVSAHGAVHHENWKDVYIRVRRAAGIEYPGYMIHEAVQWSAIHRKWFFLPRRMSNEKYSEAEDENRGTNVLVIGNEELTDFEVVRVGSENNKSRGFAAFQFVPNTHHQLIVAIKSEEKDGKPVASYASVFDIHGNVILDEYLLHGPYKYEGIAFA</sequence>
<protein>
    <recommendedName>
        <fullName evidence="5">Apyrase apy-1</fullName>
        <ecNumber evidence="7">3.6.1.6</ecNumber>
    </recommendedName>
    <alternativeName>
        <fullName evidence="5">Uridine-diphosphatase</fullName>
        <shortName evidence="5">UDPase</shortName>
    </alternativeName>
</protein>
<feature type="chain" id="PRO_0000437964" description="Apyrase apy-1" evidence="6">
    <location>
        <begin position="1"/>
        <end position="355"/>
    </location>
</feature>
<feature type="topological domain" description="Cytoplasmic" evidence="6">
    <location>
        <begin position="1"/>
        <end position="6"/>
    </location>
</feature>
<feature type="transmembrane region" description="Helical; Signal-anchor for type II membrane protein" evidence="2">
    <location>
        <begin position="7"/>
        <end position="29"/>
    </location>
</feature>
<feature type="topological domain" description="Lumenal" evidence="6">
    <location>
        <begin position="30"/>
        <end position="355"/>
    </location>
</feature>
<feature type="binding site" evidence="1">
    <location>
        <position position="119"/>
    </location>
    <ligand>
        <name>Ca(2+)</name>
        <dbReference type="ChEBI" id="CHEBI:29108"/>
    </ligand>
</feature>
<feature type="binding site" evidence="1">
    <location>
        <position position="166"/>
    </location>
    <ligand>
        <name>Ca(2+)</name>
        <dbReference type="ChEBI" id="CHEBI:29108"/>
    </ligand>
</feature>
<feature type="binding site" evidence="1">
    <location>
        <position position="235"/>
    </location>
    <ligand>
        <name>Ca(2+)</name>
        <dbReference type="ChEBI" id="CHEBI:29108"/>
    </ligand>
</feature>
<feature type="binding site" evidence="1">
    <location>
        <position position="350"/>
    </location>
    <ligand>
        <name>Ca(2+)</name>
        <dbReference type="ChEBI" id="CHEBI:29108"/>
    </ligand>
</feature>
<feature type="glycosylation site" description="N-linked (GlcNAc...) asparagine" evidence="3">
    <location>
        <position position="30"/>
    </location>
</feature>
<feature type="glycosylation site" description="N-linked (GlcNAc...) asparagine" evidence="3">
    <location>
        <position position="291"/>
    </location>
</feature>
<evidence type="ECO:0000250" key="1">
    <source>
        <dbReference type="UniProtKB" id="Q8WVQ1"/>
    </source>
</evidence>
<evidence type="ECO:0000255" key="2"/>
<evidence type="ECO:0000255" key="3">
    <source>
        <dbReference type="PROSITE-ProRule" id="PRU00498"/>
    </source>
</evidence>
<evidence type="ECO:0000269" key="4">
    <source>
    </source>
</evidence>
<evidence type="ECO:0000303" key="5">
    <source>
    </source>
</evidence>
<evidence type="ECO:0000305" key="6"/>
<evidence type="ECO:0000305" key="7">
    <source>
    </source>
</evidence>
<evidence type="ECO:0000312" key="8">
    <source>
        <dbReference type="Proteomes" id="UP000001940"/>
    </source>
</evidence>
<evidence type="ECO:0000312" key="9">
    <source>
        <dbReference type="WormBase" id="F08C6.6"/>
    </source>
</evidence>
<accession>Q19202</accession>
<name>APY1_CAEEL</name>
<keyword id="KW-0106">Calcium</keyword>
<keyword id="KW-0325">Glycoprotein</keyword>
<keyword id="KW-0378">Hydrolase</keyword>
<keyword id="KW-0472">Membrane</keyword>
<keyword id="KW-0479">Metal-binding</keyword>
<keyword id="KW-1185">Reference proteome</keyword>
<keyword id="KW-0735">Signal-anchor</keyword>
<keyword id="KW-0346">Stress response</keyword>
<keyword id="KW-0812">Transmembrane</keyword>
<keyword id="KW-1133">Transmembrane helix</keyword>
<gene>
    <name evidence="9" type="primary">apy-1</name>
    <name evidence="9" type="ORF">F08C6.6</name>
</gene>
<comment type="function">
    <text evidence="4">Hydrolyzes UDP and to a lesser extent GDP. By preventing the accumulation of NDP, may promote the reglucosylation of incompletely folded glycoproteins in the endoplasmic reticulum following the unfolded protein response.</text>
</comment>
<comment type="catalytic activity">
    <reaction evidence="7">
        <text>a ribonucleoside 5'-diphosphate + H2O = a ribonucleoside 5'-phosphate + phosphate + H(+)</text>
        <dbReference type="Rhea" id="RHEA:36799"/>
        <dbReference type="ChEBI" id="CHEBI:15377"/>
        <dbReference type="ChEBI" id="CHEBI:15378"/>
        <dbReference type="ChEBI" id="CHEBI:43474"/>
        <dbReference type="ChEBI" id="CHEBI:57930"/>
        <dbReference type="ChEBI" id="CHEBI:58043"/>
        <dbReference type="EC" id="3.6.1.6"/>
    </reaction>
</comment>
<comment type="cofactor">
    <cofactor evidence="1">
        <name>Ca(2+)</name>
        <dbReference type="ChEBI" id="CHEBI:29108"/>
    </cofactor>
</comment>
<comment type="interaction">
    <interactant intactId="EBI-319014">
        <id>Q19202</id>
    </interactant>
    <interactant intactId="EBI-312019">
        <id>Q21746</id>
        <label>sgt-1</label>
    </interactant>
    <organismsDiffer>false</organismsDiffer>
    <experiments>3</experiments>
</comment>
<comment type="subcellular location">
    <subcellularLocation>
        <location evidence="5">Endomembrane system</location>
        <topology evidence="7">Single-pass type II membrane protein</topology>
    </subcellularLocation>
</comment>
<comment type="induction">
    <text evidence="4">By ER stress.</text>
</comment>
<comment type="disruption phenotype">
    <text evidence="4">RNAi-mediated knockdown causes a 50% reduction of progeny numbers and a slower growth. RNAi-mediated knockdown at the L4 larval stage results in a reduced lifespan and in the lysosomal accumulation of lipofuscin in the intestine with age. Motility is decreased and muscle sarcomeres are often patched or wrinkled. Moderate decrease in pharyngeal pumping associated with an abnormal pharynx morphology characterized by irregular and discontinued cell junction protein ajm-1 localization at the beginning and at the end of the procorpus and in the isthmus and a loss of one of the three loops forming the lumen. In addition, causes the up-regulation of ER stress marker hsp-4 which is prevented in an ire-1 mutant background. UDPase and to a lesser extent GDPase activities are reduced.</text>
</comment>
<comment type="similarity">
    <text evidence="6">Belongs to the apyrase family.</text>
</comment>
<reference evidence="8" key="1">
    <citation type="journal article" date="1998" name="Science">
        <title>Genome sequence of the nematode C. elegans: a platform for investigating biology.</title>
        <authorList>
            <consortium name="The C. elegans sequencing consortium"/>
        </authorList>
    </citation>
    <scope>NUCLEOTIDE SEQUENCE [LARGE SCALE GENOMIC DNA]</scope>
    <source>
        <strain evidence="8">Bristol N2</strain>
    </source>
</reference>
<reference evidence="6" key="2">
    <citation type="journal article" date="2008" name="Mol. Biol. Cell">
        <title>APY-1, a novel Caenorhabditis elegans apyrase involved in unfolded protein response signalling and stress responses.</title>
        <authorList>
            <person name="Uccelletti D."/>
            <person name="Pascoli A."/>
            <person name="Farina F."/>
            <person name="Alberti A."/>
            <person name="Mancini P."/>
            <person name="Hirschberg C.B."/>
            <person name="Palleschi C."/>
        </authorList>
    </citation>
    <scope>FUNCTION</scope>
    <scope>CATALYTIC ACTIVITY</scope>
    <scope>SUBCELLULAR LOCATION</scope>
    <scope>INDUCTION BY ER STRESS</scope>
    <scope>DISRUPTION PHENOTYPE</scope>
</reference>
<proteinExistence type="evidence at protein level"/>
<dbReference type="EC" id="3.6.1.6" evidence="7"/>
<dbReference type="EMBL" id="BX284606">
    <property type="protein sequence ID" value="CCD67349.1"/>
    <property type="molecule type" value="Genomic_DNA"/>
</dbReference>
<dbReference type="PIR" id="T15973">
    <property type="entry name" value="T15973"/>
</dbReference>
<dbReference type="RefSeq" id="NP_509283.1">
    <property type="nucleotide sequence ID" value="NM_076882.11"/>
</dbReference>
<dbReference type="SMR" id="Q19202"/>
<dbReference type="DIP" id="DIP-24879N"/>
<dbReference type="FunCoup" id="Q19202">
    <property type="interactions" value="1777"/>
</dbReference>
<dbReference type="IntAct" id="Q19202">
    <property type="interactions" value="2"/>
</dbReference>
<dbReference type="STRING" id="6239.F08C6.6.1"/>
<dbReference type="GlyCosmos" id="Q19202">
    <property type="glycosylation" value="2 sites, No reported glycans"/>
</dbReference>
<dbReference type="PaxDb" id="6239-F08C6.6"/>
<dbReference type="PeptideAtlas" id="Q19202"/>
<dbReference type="EnsemblMetazoa" id="F08C6.6.1">
    <property type="protein sequence ID" value="F08C6.6.1"/>
    <property type="gene ID" value="WBGene00017244"/>
</dbReference>
<dbReference type="GeneID" id="181019"/>
<dbReference type="KEGG" id="cel:CELE_F08C6.6"/>
<dbReference type="AGR" id="WB:WBGene00017244"/>
<dbReference type="CTD" id="181019"/>
<dbReference type="WormBase" id="F08C6.6">
    <property type="protein sequence ID" value="CE27925"/>
    <property type="gene ID" value="WBGene00017244"/>
    <property type="gene designation" value="apy-1"/>
</dbReference>
<dbReference type="eggNOG" id="KOG4494">
    <property type="taxonomic scope" value="Eukaryota"/>
</dbReference>
<dbReference type="GeneTree" id="ENSGT00390000012872"/>
<dbReference type="HOGENOM" id="CLU_047493_0_1_1"/>
<dbReference type="InParanoid" id="Q19202"/>
<dbReference type="OMA" id="RDEHMGC"/>
<dbReference type="OrthoDB" id="25028at2759"/>
<dbReference type="PhylomeDB" id="Q19202"/>
<dbReference type="Reactome" id="R-CEL-6798695">
    <property type="pathway name" value="Neutrophil degranulation"/>
</dbReference>
<dbReference type="PRO" id="PR:Q19202"/>
<dbReference type="Proteomes" id="UP000001940">
    <property type="component" value="Chromosome X"/>
</dbReference>
<dbReference type="Bgee" id="WBGene00017244">
    <property type="expression patterns" value="Expressed in larva and 4 other cell types or tissues"/>
</dbReference>
<dbReference type="GO" id="GO:0012505">
    <property type="term" value="C:endomembrane system"/>
    <property type="evidence" value="ECO:0007669"/>
    <property type="project" value="UniProtKB-SubCell"/>
</dbReference>
<dbReference type="GO" id="GO:0016020">
    <property type="term" value="C:membrane"/>
    <property type="evidence" value="ECO:0000315"/>
    <property type="project" value="WormBase"/>
</dbReference>
<dbReference type="GO" id="GO:0005509">
    <property type="term" value="F:calcium ion binding"/>
    <property type="evidence" value="ECO:0007669"/>
    <property type="project" value="InterPro"/>
</dbReference>
<dbReference type="GO" id="GO:0004382">
    <property type="term" value="F:GDP phosphatase activity"/>
    <property type="evidence" value="ECO:0000315"/>
    <property type="project" value="WormBase"/>
</dbReference>
<dbReference type="GO" id="GO:0045134">
    <property type="term" value="F:UDP phosphatase activity"/>
    <property type="evidence" value="ECO:0000315"/>
    <property type="project" value="WormBase"/>
</dbReference>
<dbReference type="GO" id="GO:0036500">
    <property type="term" value="P:ATF6-mediated unfolded protein response"/>
    <property type="evidence" value="ECO:0000270"/>
    <property type="project" value="WormBase"/>
</dbReference>
<dbReference type="GO" id="GO:0008340">
    <property type="term" value="P:determination of adult lifespan"/>
    <property type="evidence" value="ECO:0000315"/>
    <property type="project" value="WormBase"/>
</dbReference>
<dbReference type="GO" id="GO:0030968">
    <property type="term" value="P:endoplasmic reticulum unfolded protein response"/>
    <property type="evidence" value="ECO:0000270"/>
    <property type="project" value="WormBase"/>
</dbReference>
<dbReference type="GO" id="GO:0007369">
    <property type="term" value="P:gastrulation"/>
    <property type="evidence" value="ECO:0000315"/>
    <property type="project" value="WormBase"/>
</dbReference>
<dbReference type="GO" id="GO:0046712">
    <property type="term" value="P:GDP catabolic process"/>
    <property type="evidence" value="ECO:0000315"/>
    <property type="project" value="WormBase"/>
</dbReference>
<dbReference type="GO" id="GO:0036498">
    <property type="term" value="P:IRE1-mediated unfolded protein response"/>
    <property type="evidence" value="ECO:0000270"/>
    <property type="project" value="WormBase"/>
</dbReference>
<dbReference type="GO" id="GO:0160094">
    <property type="term" value="P:nematode pharynx development"/>
    <property type="evidence" value="ECO:0000315"/>
    <property type="project" value="WormBase"/>
</dbReference>
<dbReference type="GO" id="GO:0030166">
    <property type="term" value="P:proteoglycan biosynthetic process"/>
    <property type="evidence" value="ECO:0000318"/>
    <property type="project" value="GO_Central"/>
</dbReference>
<dbReference type="GO" id="GO:0040009">
    <property type="term" value="P:regulation of growth rate"/>
    <property type="evidence" value="ECO:0000315"/>
    <property type="project" value="WormBase"/>
</dbReference>
<dbReference type="GO" id="GO:0009408">
    <property type="term" value="P:response to heat"/>
    <property type="evidence" value="ECO:0000270"/>
    <property type="project" value="WormBase"/>
</dbReference>
<dbReference type="GO" id="GO:0006256">
    <property type="term" value="P:UDP catabolic process"/>
    <property type="evidence" value="ECO:0000315"/>
    <property type="project" value="WormBase"/>
</dbReference>
<dbReference type="FunFam" id="2.120.10.100:FF:000001">
    <property type="entry name" value="Soluble calcium-activated nucleotidase 1"/>
    <property type="match status" value="1"/>
</dbReference>
<dbReference type="Gene3D" id="2.120.10.100">
    <property type="entry name" value="Apyrase"/>
    <property type="match status" value="1"/>
</dbReference>
<dbReference type="InterPro" id="IPR009283">
    <property type="entry name" value="Apyrase"/>
</dbReference>
<dbReference type="InterPro" id="IPR036258">
    <property type="entry name" value="Apyrase_sf"/>
</dbReference>
<dbReference type="PANTHER" id="PTHR13023">
    <property type="entry name" value="APYRASE"/>
    <property type="match status" value="1"/>
</dbReference>
<dbReference type="PANTHER" id="PTHR13023:SF3">
    <property type="entry name" value="SOLUBLE CALCIUM-ACTIVATED NUCLEOTIDASE 1"/>
    <property type="match status" value="1"/>
</dbReference>
<dbReference type="Pfam" id="PF06079">
    <property type="entry name" value="Apyrase"/>
    <property type="match status" value="1"/>
</dbReference>
<dbReference type="SUPFAM" id="SSF101887">
    <property type="entry name" value="Apyrase"/>
    <property type="match status" value="1"/>
</dbReference>
<organism evidence="8">
    <name type="scientific">Caenorhabditis elegans</name>
    <dbReference type="NCBI Taxonomy" id="6239"/>
    <lineage>
        <taxon>Eukaryota</taxon>
        <taxon>Metazoa</taxon>
        <taxon>Ecdysozoa</taxon>
        <taxon>Nematoda</taxon>
        <taxon>Chromadorea</taxon>
        <taxon>Rhabditida</taxon>
        <taxon>Rhabditina</taxon>
        <taxon>Rhabditomorpha</taxon>
        <taxon>Rhabditoidea</taxon>
        <taxon>Rhabditidae</taxon>
        <taxon>Peloderinae</taxon>
        <taxon>Caenorhabditis</taxon>
    </lineage>
</organism>